<dbReference type="EC" id="3.6.1.-" evidence="1"/>
<dbReference type="EC" id="3.6.1.22" evidence="1"/>
<dbReference type="EMBL" id="CU928160">
    <property type="protein sequence ID" value="CAR00970.1"/>
    <property type="molecule type" value="Genomic_DNA"/>
</dbReference>
<dbReference type="RefSeq" id="WP_000373940.1">
    <property type="nucleotide sequence ID" value="NC_011741.1"/>
</dbReference>
<dbReference type="SMR" id="B7M7Q5"/>
<dbReference type="GeneID" id="93777898"/>
<dbReference type="KEGG" id="ecr:ECIAI1_4211"/>
<dbReference type="HOGENOM" id="CLU_037162_0_1_6"/>
<dbReference type="GO" id="GO:0005829">
    <property type="term" value="C:cytosol"/>
    <property type="evidence" value="ECO:0007669"/>
    <property type="project" value="TreeGrafter"/>
</dbReference>
<dbReference type="GO" id="GO:0000287">
    <property type="term" value="F:magnesium ion binding"/>
    <property type="evidence" value="ECO:0007669"/>
    <property type="project" value="UniProtKB-UniRule"/>
</dbReference>
<dbReference type="GO" id="GO:0030145">
    <property type="term" value="F:manganese ion binding"/>
    <property type="evidence" value="ECO:0007669"/>
    <property type="project" value="UniProtKB-UniRule"/>
</dbReference>
<dbReference type="GO" id="GO:0000210">
    <property type="term" value="F:NAD+ diphosphatase activity"/>
    <property type="evidence" value="ECO:0007669"/>
    <property type="project" value="UniProtKB-UniRule"/>
</dbReference>
<dbReference type="GO" id="GO:0035529">
    <property type="term" value="F:NADH pyrophosphatase activity"/>
    <property type="evidence" value="ECO:0007669"/>
    <property type="project" value="TreeGrafter"/>
</dbReference>
<dbReference type="GO" id="GO:0110153">
    <property type="term" value="F:RNA NAD-cap (NMN-forming) hydrolase activity"/>
    <property type="evidence" value="ECO:0007669"/>
    <property type="project" value="RHEA"/>
</dbReference>
<dbReference type="GO" id="GO:0008270">
    <property type="term" value="F:zinc ion binding"/>
    <property type="evidence" value="ECO:0007669"/>
    <property type="project" value="UniProtKB-UniRule"/>
</dbReference>
<dbReference type="GO" id="GO:0019677">
    <property type="term" value="P:NAD catabolic process"/>
    <property type="evidence" value="ECO:0007669"/>
    <property type="project" value="TreeGrafter"/>
</dbReference>
<dbReference type="GO" id="GO:0006734">
    <property type="term" value="P:NADH metabolic process"/>
    <property type="evidence" value="ECO:0007669"/>
    <property type="project" value="TreeGrafter"/>
</dbReference>
<dbReference type="GO" id="GO:0006742">
    <property type="term" value="P:NADP catabolic process"/>
    <property type="evidence" value="ECO:0007669"/>
    <property type="project" value="TreeGrafter"/>
</dbReference>
<dbReference type="CDD" id="cd03429">
    <property type="entry name" value="NUDIX_NADH_pyrophosphatase_Nudt13"/>
    <property type="match status" value="1"/>
</dbReference>
<dbReference type="FunFam" id="3.90.79.10:FF:000004">
    <property type="entry name" value="NADH pyrophosphatase"/>
    <property type="match status" value="1"/>
</dbReference>
<dbReference type="FunFam" id="3.90.79.20:FF:000001">
    <property type="entry name" value="NADH pyrophosphatase"/>
    <property type="match status" value="1"/>
</dbReference>
<dbReference type="Gene3D" id="3.90.79.20">
    <property type="match status" value="1"/>
</dbReference>
<dbReference type="Gene3D" id="3.90.79.10">
    <property type="entry name" value="Nucleoside Triphosphate Pyrophosphohydrolase"/>
    <property type="match status" value="1"/>
</dbReference>
<dbReference type="HAMAP" id="MF_00297">
    <property type="entry name" value="Nudix_NudC"/>
    <property type="match status" value="1"/>
</dbReference>
<dbReference type="InterPro" id="IPR050241">
    <property type="entry name" value="NAD-cap_RNA_hydrolase_NudC"/>
</dbReference>
<dbReference type="InterPro" id="IPR049734">
    <property type="entry name" value="NudC-like_C"/>
</dbReference>
<dbReference type="InterPro" id="IPR015797">
    <property type="entry name" value="NUDIX_hydrolase-like_dom_sf"/>
</dbReference>
<dbReference type="InterPro" id="IPR020084">
    <property type="entry name" value="NUDIX_hydrolase_CS"/>
</dbReference>
<dbReference type="InterPro" id="IPR000086">
    <property type="entry name" value="NUDIX_hydrolase_dom"/>
</dbReference>
<dbReference type="InterPro" id="IPR022925">
    <property type="entry name" value="RNA_Hydrolase_NudC"/>
</dbReference>
<dbReference type="InterPro" id="IPR015376">
    <property type="entry name" value="Znr_NADH_PPase"/>
</dbReference>
<dbReference type="NCBIfam" id="NF001299">
    <property type="entry name" value="PRK00241.1"/>
    <property type="match status" value="1"/>
</dbReference>
<dbReference type="PANTHER" id="PTHR42904:SF6">
    <property type="entry name" value="NAD-CAPPED RNA HYDROLASE NUDT12"/>
    <property type="match status" value="1"/>
</dbReference>
<dbReference type="PANTHER" id="PTHR42904">
    <property type="entry name" value="NUDIX HYDROLASE, NUDC SUBFAMILY"/>
    <property type="match status" value="1"/>
</dbReference>
<dbReference type="Pfam" id="PF00293">
    <property type="entry name" value="NUDIX"/>
    <property type="match status" value="1"/>
</dbReference>
<dbReference type="Pfam" id="PF09297">
    <property type="entry name" value="Zn_ribbon_NUD"/>
    <property type="match status" value="1"/>
</dbReference>
<dbReference type="SUPFAM" id="SSF55811">
    <property type="entry name" value="Nudix"/>
    <property type="match status" value="2"/>
</dbReference>
<dbReference type="PROSITE" id="PS51462">
    <property type="entry name" value="NUDIX"/>
    <property type="match status" value="1"/>
</dbReference>
<dbReference type="PROSITE" id="PS00893">
    <property type="entry name" value="NUDIX_BOX"/>
    <property type="match status" value="1"/>
</dbReference>
<reference key="1">
    <citation type="journal article" date="2009" name="PLoS Genet.">
        <title>Organised genome dynamics in the Escherichia coli species results in highly diverse adaptive paths.</title>
        <authorList>
            <person name="Touchon M."/>
            <person name="Hoede C."/>
            <person name="Tenaillon O."/>
            <person name="Barbe V."/>
            <person name="Baeriswyl S."/>
            <person name="Bidet P."/>
            <person name="Bingen E."/>
            <person name="Bonacorsi S."/>
            <person name="Bouchier C."/>
            <person name="Bouvet O."/>
            <person name="Calteau A."/>
            <person name="Chiapello H."/>
            <person name="Clermont O."/>
            <person name="Cruveiller S."/>
            <person name="Danchin A."/>
            <person name="Diard M."/>
            <person name="Dossat C."/>
            <person name="Karoui M.E."/>
            <person name="Frapy E."/>
            <person name="Garry L."/>
            <person name="Ghigo J.M."/>
            <person name="Gilles A.M."/>
            <person name="Johnson J."/>
            <person name="Le Bouguenec C."/>
            <person name="Lescat M."/>
            <person name="Mangenot S."/>
            <person name="Martinez-Jehanne V."/>
            <person name="Matic I."/>
            <person name="Nassif X."/>
            <person name="Oztas S."/>
            <person name="Petit M.A."/>
            <person name="Pichon C."/>
            <person name="Rouy Z."/>
            <person name="Ruf C.S."/>
            <person name="Schneider D."/>
            <person name="Tourret J."/>
            <person name="Vacherie B."/>
            <person name="Vallenet D."/>
            <person name="Medigue C."/>
            <person name="Rocha E.P.C."/>
            <person name="Denamur E."/>
        </authorList>
    </citation>
    <scope>NUCLEOTIDE SEQUENCE [LARGE SCALE GENOMIC DNA]</scope>
    <source>
        <strain>IAI1</strain>
    </source>
</reference>
<comment type="function">
    <text evidence="1">mRNA decapping enzyme that specifically removes the nicotinamide adenine dinucleotide (NAD) cap from a subset of mRNAs by hydrolyzing the diphosphate linkage to produce nicotinamide mononucleotide (NMN) and 5' monophosphate mRNA. The NAD-cap is present at the 5'-end of some mRNAs and stabilizes RNA against 5'-processing. Has preference for mRNAs with a 5'-end purine. Catalyzes the hydrolysis of a broad range of dinucleotide pyrophosphates.</text>
</comment>
<comment type="catalytic activity">
    <reaction evidence="1">
        <text>a 5'-end NAD(+)-phospho-ribonucleoside in mRNA + H2O = a 5'-end phospho-adenosine-phospho-ribonucleoside in mRNA + beta-nicotinamide D-ribonucleotide + 2 H(+)</text>
        <dbReference type="Rhea" id="RHEA:60876"/>
        <dbReference type="Rhea" id="RHEA-COMP:15698"/>
        <dbReference type="Rhea" id="RHEA-COMP:15719"/>
        <dbReference type="ChEBI" id="CHEBI:14649"/>
        <dbReference type="ChEBI" id="CHEBI:15377"/>
        <dbReference type="ChEBI" id="CHEBI:15378"/>
        <dbReference type="ChEBI" id="CHEBI:144029"/>
        <dbReference type="ChEBI" id="CHEBI:144051"/>
    </reaction>
    <physiologicalReaction direction="left-to-right" evidence="1">
        <dbReference type="Rhea" id="RHEA:60877"/>
    </physiologicalReaction>
</comment>
<comment type="catalytic activity">
    <reaction evidence="1">
        <text>NAD(+) + H2O = beta-nicotinamide D-ribonucleotide + AMP + 2 H(+)</text>
        <dbReference type="Rhea" id="RHEA:11800"/>
        <dbReference type="ChEBI" id="CHEBI:14649"/>
        <dbReference type="ChEBI" id="CHEBI:15377"/>
        <dbReference type="ChEBI" id="CHEBI:15378"/>
        <dbReference type="ChEBI" id="CHEBI:57540"/>
        <dbReference type="ChEBI" id="CHEBI:456215"/>
        <dbReference type="EC" id="3.6.1.22"/>
    </reaction>
</comment>
<comment type="catalytic activity">
    <reaction evidence="1">
        <text>NADH + H2O = reduced beta-nicotinamide D-ribonucleotide + AMP + 2 H(+)</text>
        <dbReference type="Rhea" id="RHEA:48868"/>
        <dbReference type="ChEBI" id="CHEBI:15377"/>
        <dbReference type="ChEBI" id="CHEBI:15378"/>
        <dbReference type="ChEBI" id="CHEBI:57945"/>
        <dbReference type="ChEBI" id="CHEBI:90832"/>
        <dbReference type="ChEBI" id="CHEBI:456215"/>
        <dbReference type="EC" id="3.6.1.22"/>
    </reaction>
</comment>
<comment type="cofactor">
    <cofactor evidence="1">
        <name>Mg(2+)</name>
        <dbReference type="ChEBI" id="CHEBI:18420"/>
    </cofactor>
    <cofactor evidence="1">
        <name>Mn(2+)</name>
        <dbReference type="ChEBI" id="CHEBI:29035"/>
    </cofactor>
    <text evidence="1">Divalent metal cations. Mg(2+) or Mn(2+).</text>
</comment>
<comment type="cofactor">
    <cofactor evidence="1">
        <name>Zn(2+)</name>
        <dbReference type="ChEBI" id="CHEBI:29105"/>
    </cofactor>
    <text evidence="1">Binds 1 zinc ion per subunit.</text>
</comment>
<comment type="subunit">
    <text evidence="1">Homodimer.</text>
</comment>
<comment type="similarity">
    <text evidence="1">Belongs to the Nudix hydrolase family. NudC subfamily.</text>
</comment>
<sequence>MDRIIEKLDHGWWVVSHEQKLWLPKGELPYGEAANFDLVGQRALQIGEWQGEPVWLVQQQRRHDMGSVRQVIDLDVGLFQLAGRGVQLAEFYRSHKYCGYCGHEMYPSKTEWAMLCSHCRERYYPQIAPCIIVAIRRDDSILLAQHTRHRNGVHTVLAGFVEVGETLEQAVAREVMEESGIKVKNLRYVTSQPWPFPQSLMTAFMAEYDSGDIVIDPKELLEANWYRYDDLPLLPPPGTVARRLIEDTVAMCRAEYE</sequence>
<protein>
    <recommendedName>
        <fullName evidence="1">NAD-capped RNA hydrolase NudC</fullName>
        <shortName evidence="1">DeNADding enzyme NudC</shortName>
        <ecNumber evidence="1">3.6.1.-</ecNumber>
    </recommendedName>
    <alternativeName>
        <fullName evidence="1">NADH pyrophosphatase</fullName>
        <ecNumber evidence="1">3.6.1.22</ecNumber>
    </alternativeName>
</protein>
<gene>
    <name evidence="1" type="primary">nudC</name>
    <name type="ordered locus">ECIAI1_4211</name>
</gene>
<name>NUDC_ECO8A</name>
<organism>
    <name type="scientific">Escherichia coli O8 (strain IAI1)</name>
    <dbReference type="NCBI Taxonomy" id="585034"/>
    <lineage>
        <taxon>Bacteria</taxon>
        <taxon>Pseudomonadati</taxon>
        <taxon>Pseudomonadota</taxon>
        <taxon>Gammaproteobacteria</taxon>
        <taxon>Enterobacterales</taxon>
        <taxon>Enterobacteriaceae</taxon>
        <taxon>Escherichia</taxon>
    </lineage>
</organism>
<keyword id="KW-0378">Hydrolase</keyword>
<keyword id="KW-0460">Magnesium</keyword>
<keyword id="KW-0464">Manganese</keyword>
<keyword id="KW-0479">Metal-binding</keyword>
<keyword id="KW-0520">NAD</keyword>
<keyword id="KW-0862">Zinc</keyword>
<proteinExistence type="inferred from homology"/>
<accession>B7M7Q5</accession>
<evidence type="ECO:0000255" key="1">
    <source>
        <dbReference type="HAMAP-Rule" id="MF_00297"/>
    </source>
</evidence>
<feature type="chain" id="PRO_1000119462" description="NAD-capped RNA hydrolase NudC">
    <location>
        <begin position="1"/>
        <end position="257"/>
    </location>
</feature>
<feature type="domain" description="Nudix hydrolase" evidence="1">
    <location>
        <begin position="125"/>
        <end position="248"/>
    </location>
</feature>
<feature type="short sequence motif" description="Nudix box" evidence="1">
    <location>
        <begin position="159"/>
        <end position="180"/>
    </location>
</feature>
<feature type="binding site" evidence="1">
    <location>
        <position position="25"/>
    </location>
    <ligand>
        <name>substrate</name>
    </ligand>
</feature>
<feature type="binding site" evidence="1">
    <location>
        <position position="69"/>
    </location>
    <ligand>
        <name>substrate</name>
    </ligand>
</feature>
<feature type="binding site" evidence="1">
    <location>
        <position position="98"/>
    </location>
    <ligand>
        <name>Zn(2+)</name>
        <dbReference type="ChEBI" id="CHEBI:29105"/>
    </ligand>
</feature>
<feature type="binding site" evidence="1">
    <location>
        <position position="101"/>
    </location>
    <ligand>
        <name>Zn(2+)</name>
        <dbReference type="ChEBI" id="CHEBI:29105"/>
    </ligand>
</feature>
<feature type="binding site" evidence="1">
    <location>
        <position position="111"/>
    </location>
    <ligand>
        <name>substrate</name>
    </ligand>
</feature>
<feature type="binding site" evidence="1">
    <location>
        <position position="116"/>
    </location>
    <ligand>
        <name>Zn(2+)</name>
        <dbReference type="ChEBI" id="CHEBI:29105"/>
    </ligand>
</feature>
<feature type="binding site" evidence="1">
    <location>
        <position position="119"/>
    </location>
    <ligand>
        <name>Zn(2+)</name>
        <dbReference type="ChEBI" id="CHEBI:29105"/>
    </ligand>
</feature>
<feature type="binding site" evidence="1">
    <location>
        <position position="124"/>
    </location>
    <ligand>
        <name>substrate</name>
    </ligand>
</feature>
<feature type="binding site" evidence="1">
    <location>
        <position position="158"/>
    </location>
    <ligand>
        <name>a divalent metal cation</name>
        <dbReference type="ChEBI" id="CHEBI:60240"/>
        <label>1</label>
    </ligand>
</feature>
<feature type="binding site" evidence="1">
    <location>
        <position position="174"/>
    </location>
    <ligand>
        <name>a divalent metal cation</name>
        <dbReference type="ChEBI" id="CHEBI:60240"/>
        <label>2</label>
    </ligand>
</feature>
<feature type="binding site" evidence="1">
    <location>
        <position position="174"/>
    </location>
    <ligand>
        <name>a divalent metal cation</name>
        <dbReference type="ChEBI" id="CHEBI:60240"/>
        <label>3</label>
    </ligand>
</feature>
<feature type="binding site" evidence="1">
    <location>
        <position position="178"/>
    </location>
    <ligand>
        <name>a divalent metal cation</name>
        <dbReference type="ChEBI" id="CHEBI:60240"/>
        <label>1</label>
    </ligand>
</feature>
<feature type="binding site" evidence="1">
    <location>
        <position position="178"/>
    </location>
    <ligand>
        <name>a divalent metal cation</name>
        <dbReference type="ChEBI" id="CHEBI:60240"/>
        <label>3</label>
    </ligand>
</feature>
<feature type="binding site" evidence="1">
    <location>
        <begin position="192"/>
        <end position="199"/>
    </location>
    <ligand>
        <name>substrate</name>
    </ligand>
</feature>
<feature type="binding site" evidence="1">
    <location>
        <position position="219"/>
    </location>
    <ligand>
        <name>a divalent metal cation</name>
        <dbReference type="ChEBI" id="CHEBI:60240"/>
        <label>1</label>
    </ligand>
</feature>
<feature type="binding site" evidence="1">
    <location>
        <position position="219"/>
    </location>
    <ligand>
        <name>a divalent metal cation</name>
        <dbReference type="ChEBI" id="CHEBI:60240"/>
        <label>3</label>
    </ligand>
</feature>
<feature type="binding site" evidence="1">
    <location>
        <position position="241"/>
    </location>
    <ligand>
        <name>substrate</name>
    </ligand>
</feature>